<comment type="function">
    <text evidence="1">NDH-1 shuttles electrons from NADH, via FMN and iron-sulfur (Fe-S) centers, to quinones in the respiratory chain. The immediate electron acceptor for the enzyme in this species is believed to be ubiquinone. Couples the redox reaction to proton translocation (for every two electrons transferred, four hydrogen ions are translocated across the cytoplasmic membrane), and thus conserves the redox energy in a proton gradient.</text>
</comment>
<comment type="catalytic activity">
    <reaction evidence="1">
        <text>a quinone + NADH + 5 H(+)(in) = a quinol + NAD(+) + 4 H(+)(out)</text>
        <dbReference type="Rhea" id="RHEA:57888"/>
        <dbReference type="ChEBI" id="CHEBI:15378"/>
        <dbReference type="ChEBI" id="CHEBI:24646"/>
        <dbReference type="ChEBI" id="CHEBI:57540"/>
        <dbReference type="ChEBI" id="CHEBI:57945"/>
        <dbReference type="ChEBI" id="CHEBI:132124"/>
    </reaction>
</comment>
<comment type="subunit">
    <text evidence="1">NDH-1 is composed of 13 different subunits. Subunits NuoA, H, J, K, L, M, N constitute the membrane sector of the complex.</text>
</comment>
<comment type="subcellular location">
    <subcellularLocation>
        <location evidence="1">Cell inner membrane</location>
        <topology evidence="1">Multi-pass membrane protein</topology>
    </subcellularLocation>
</comment>
<comment type="similarity">
    <text evidence="1">Belongs to the complex I subunit 4L family.</text>
</comment>
<sequence length="100" mass="10891">MIPLQHGLILAAILFVLGLTGLLVRRNLLFMLISLEVMINAAALAFIVAGSYWGQPDGQVMYILAISLAAAEASIGLALLLQLYRRRHTLNIDTVSEMRG</sequence>
<gene>
    <name evidence="1" type="primary">nuoK</name>
    <name type="ordered locus">Spro_3299</name>
</gene>
<reference key="1">
    <citation type="submission" date="2007-09" db="EMBL/GenBank/DDBJ databases">
        <title>Complete sequence of chromosome of Serratia proteamaculans 568.</title>
        <authorList>
            <consortium name="US DOE Joint Genome Institute"/>
            <person name="Copeland A."/>
            <person name="Lucas S."/>
            <person name="Lapidus A."/>
            <person name="Barry K."/>
            <person name="Glavina del Rio T."/>
            <person name="Dalin E."/>
            <person name="Tice H."/>
            <person name="Pitluck S."/>
            <person name="Chain P."/>
            <person name="Malfatti S."/>
            <person name="Shin M."/>
            <person name="Vergez L."/>
            <person name="Schmutz J."/>
            <person name="Larimer F."/>
            <person name="Land M."/>
            <person name="Hauser L."/>
            <person name="Kyrpides N."/>
            <person name="Kim E."/>
            <person name="Taghavi S."/>
            <person name="Newman L."/>
            <person name="Vangronsveld J."/>
            <person name="van der Lelie D."/>
            <person name="Richardson P."/>
        </authorList>
    </citation>
    <scope>NUCLEOTIDE SEQUENCE [LARGE SCALE GENOMIC DNA]</scope>
    <source>
        <strain>568</strain>
    </source>
</reference>
<protein>
    <recommendedName>
        <fullName evidence="1">NADH-quinone oxidoreductase subunit K</fullName>
        <ecNumber evidence="1">7.1.1.-</ecNumber>
    </recommendedName>
    <alternativeName>
        <fullName evidence="1">NADH dehydrogenase I subunit K</fullName>
    </alternativeName>
    <alternativeName>
        <fullName evidence="1">NDH-1 subunit K</fullName>
    </alternativeName>
</protein>
<name>NUOK_SERP5</name>
<feature type="chain" id="PRO_0000390233" description="NADH-quinone oxidoreductase subunit K">
    <location>
        <begin position="1"/>
        <end position="100"/>
    </location>
</feature>
<feature type="transmembrane region" description="Helical" evidence="1">
    <location>
        <begin position="4"/>
        <end position="24"/>
    </location>
</feature>
<feature type="transmembrane region" description="Helical" evidence="1">
    <location>
        <begin position="28"/>
        <end position="48"/>
    </location>
</feature>
<feature type="transmembrane region" description="Helical" evidence="1">
    <location>
        <begin position="60"/>
        <end position="80"/>
    </location>
</feature>
<dbReference type="EC" id="7.1.1.-" evidence="1"/>
<dbReference type="EMBL" id="CP000826">
    <property type="protein sequence ID" value="ABV42397.1"/>
    <property type="molecule type" value="Genomic_DNA"/>
</dbReference>
<dbReference type="SMR" id="A8GH07"/>
<dbReference type="STRING" id="399741.Spro_3299"/>
<dbReference type="KEGG" id="spe:Spro_3299"/>
<dbReference type="eggNOG" id="COG0713">
    <property type="taxonomic scope" value="Bacteria"/>
</dbReference>
<dbReference type="HOGENOM" id="CLU_144724_0_1_6"/>
<dbReference type="OrthoDB" id="9801357at2"/>
<dbReference type="GO" id="GO:0030964">
    <property type="term" value="C:NADH dehydrogenase complex"/>
    <property type="evidence" value="ECO:0007669"/>
    <property type="project" value="TreeGrafter"/>
</dbReference>
<dbReference type="GO" id="GO:0005886">
    <property type="term" value="C:plasma membrane"/>
    <property type="evidence" value="ECO:0007669"/>
    <property type="project" value="UniProtKB-SubCell"/>
</dbReference>
<dbReference type="GO" id="GO:0050136">
    <property type="term" value="F:NADH:ubiquinone reductase (non-electrogenic) activity"/>
    <property type="evidence" value="ECO:0007669"/>
    <property type="project" value="UniProtKB-UniRule"/>
</dbReference>
<dbReference type="GO" id="GO:0048038">
    <property type="term" value="F:quinone binding"/>
    <property type="evidence" value="ECO:0007669"/>
    <property type="project" value="UniProtKB-KW"/>
</dbReference>
<dbReference type="GO" id="GO:0042773">
    <property type="term" value="P:ATP synthesis coupled electron transport"/>
    <property type="evidence" value="ECO:0007669"/>
    <property type="project" value="InterPro"/>
</dbReference>
<dbReference type="FunFam" id="1.10.287.3510:FF:000001">
    <property type="entry name" value="NADH-quinone oxidoreductase subunit K"/>
    <property type="match status" value="1"/>
</dbReference>
<dbReference type="Gene3D" id="1.10.287.3510">
    <property type="match status" value="1"/>
</dbReference>
<dbReference type="HAMAP" id="MF_01456">
    <property type="entry name" value="NDH1_NuoK"/>
    <property type="match status" value="1"/>
</dbReference>
<dbReference type="InterPro" id="IPR001133">
    <property type="entry name" value="NADH_UbQ_OxRdtase_chain4L/K"/>
</dbReference>
<dbReference type="InterPro" id="IPR039428">
    <property type="entry name" value="NUOK/Mnh_C1-like"/>
</dbReference>
<dbReference type="NCBIfam" id="NF004319">
    <property type="entry name" value="PRK05715.1-1"/>
    <property type="match status" value="1"/>
</dbReference>
<dbReference type="NCBIfam" id="NF004320">
    <property type="entry name" value="PRK05715.1-2"/>
    <property type="match status" value="1"/>
</dbReference>
<dbReference type="PANTHER" id="PTHR11434:SF16">
    <property type="entry name" value="NADH-UBIQUINONE OXIDOREDUCTASE CHAIN 4L"/>
    <property type="match status" value="1"/>
</dbReference>
<dbReference type="PANTHER" id="PTHR11434">
    <property type="entry name" value="NADH-UBIQUINONE OXIDOREDUCTASE SUBUNIT ND4L"/>
    <property type="match status" value="1"/>
</dbReference>
<dbReference type="Pfam" id="PF00420">
    <property type="entry name" value="Oxidored_q2"/>
    <property type="match status" value="1"/>
</dbReference>
<proteinExistence type="inferred from homology"/>
<organism>
    <name type="scientific">Serratia proteamaculans (strain 568)</name>
    <dbReference type="NCBI Taxonomy" id="399741"/>
    <lineage>
        <taxon>Bacteria</taxon>
        <taxon>Pseudomonadati</taxon>
        <taxon>Pseudomonadota</taxon>
        <taxon>Gammaproteobacteria</taxon>
        <taxon>Enterobacterales</taxon>
        <taxon>Yersiniaceae</taxon>
        <taxon>Serratia</taxon>
    </lineage>
</organism>
<accession>A8GH07</accession>
<evidence type="ECO:0000255" key="1">
    <source>
        <dbReference type="HAMAP-Rule" id="MF_01456"/>
    </source>
</evidence>
<keyword id="KW-0997">Cell inner membrane</keyword>
<keyword id="KW-1003">Cell membrane</keyword>
<keyword id="KW-0472">Membrane</keyword>
<keyword id="KW-0520">NAD</keyword>
<keyword id="KW-0874">Quinone</keyword>
<keyword id="KW-1278">Translocase</keyword>
<keyword id="KW-0812">Transmembrane</keyword>
<keyword id="KW-1133">Transmembrane helix</keyword>
<keyword id="KW-0813">Transport</keyword>
<keyword id="KW-0830">Ubiquinone</keyword>